<dbReference type="EC" id="2.1.1.182" evidence="1"/>
<dbReference type="EMBL" id="CP000557">
    <property type="protein sequence ID" value="ABO65422.1"/>
    <property type="molecule type" value="Genomic_DNA"/>
</dbReference>
<dbReference type="RefSeq" id="WP_011886604.1">
    <property type="nucleotide sequence ID" value="NC_009328.1"/>
</dbReference>
<dbReference type="SMR" id="A4IJB8"/>
<dbReference type="GeneID" id="87622411"/>
<dbReference type="KEGG" id="gtn:GTNG_0035"/>
<dbReference type="eggNOG" id="COG0030">
    <property type="taxonomic scope" value="Bacteria"/>
</dbReference>
<dbReference type="HOGENOM" id="CLU_041220_0_0_9"/>
<dbReference type="Proteomes" id="UP000001578">
    <property type="component" value="Chromosome"/>
</dbReference>
<dbReference type="GO" id="GO:0005829">
    <property type="term" value="C:cytosol"/>
    <property type="evidence" value="ECO:0007669"/>
    <property type="project" value="TreeGrafter"/>
</dbReference>
<dbReference type="GO" id="GO:0052908">
    <property type="term" value="F:16S rRNA (adenine(1518)-N(6)/adenine(1519)-N(6))-dimethyltransferase activity"/>
    <property type="evidence" value="ECO:0007669"/>
    <property type="project" value="UniProtKB-EC"/>
</dbReference>
<dbReference type="GO" id="GO:0003723">
    <property type="term" value="F:RNA binding"/>
    <property type="evidence" value="ECO:0007669"/>
    <property type="project" value="UniProtKB-KW"/>
</dbReference>
<dbReference type="CDD" id="cd02440">
    <property type="entry name" value="AdoMet_MTases"/>
    <property type="match status" value="1"/>
</dbReference>
<dbReference type="FunFam" id="1.10.8.100:FF:000002">
    <property type="entry name" value="Ribosomal RNA small subunit methyltransferase A"/>
    <property type="match status" value="1"/>
</dbReference>
<dbReference type="FunFam" id="3.40.50.150:FF:000023">
    <property type="entry name" value="Ribosomal RNA small subunit methyltransferase A"/>
    <property type="match status" value="1"/>
</dbReference>
<dbReference type="Gene3D" id="1.10.8.100">
    <property type="entry name" value="Ribosomal RNA adenine dimethylase-like, domain 2"/>
    <property type="match status" value="1"/>
</dbReference>
<dbReference type="Gene3D" id="3.40.50.150">
    <property type="entry name" value="Vaccinia Virus protein VP39"/>
    <property type="match status" value="1"/>
</dbReference>
<dbReference type="HAMAP" id="MF_00607">
    <property type="entry name" value="16SrRNA_methyltr_A"/>
    <property type="match status" value="1"/>
</dbReference>
<dbReference type="InterPro" id="IPR001737">
    <property type="entry name" value="KsgA/Erm"/>
</dbReference>
<dbReference type="InterPro" id="IPR023165">
    <property type="entry name" value="rRNA_Ade_diMease-like_C"/>
</dbReference>
<dbReference type="InterPro" id="IPR020596">
    <property type="entry name" value="rRNA_Ade_Mease_Trfase_CS"/>
</dbReference>
<dbReference type="InterPro" id="IPR020598">
    <property type="entry name" value="rRNA_Ade_methylase_Trfase_N"/>
</dbReference>
<dbReference type="InterPro" id="IPR011530">
    <property type="entry name" value="rRNA_adenine_dimethylase"/>
</dbReference>
<dbReference type="InterPro" id="IPR029063">
    <property type="entry name" value="SAM-dependent_MTases_sf"/>
</dbReference>
<dbReference type="NCBIfam" id="TIGR00755">
    <property type="entry name" value="ksgA"/>
    <property type="match status" value="1"/>
</dbReference>
<dbReference type="PANTHER" id="PTHR11727">
    <property type="entry name" value="DIMETHYLADENOSINE TRANSFERASE"/>
    <property type="match status" value="1"/>
</dbReference>
<dbReference type="PANTHER" id="PTHR11727:SF7">
    <property type="entry name" value="DIMETHYLADENOSINE TRANSFERASE-RELATED"/>
    <property type="match status" value="1"/>
</dbReference>
<dbReference type="Pfam" id="PF00398">
    <property type="entry name" value="RrnaAD"/>
    <property type="match status" value="1"/>
</dbReference>
<dbReference type="SMART" id="SM00650">
    <property type="entry name" value="rADc"/>
    <property type="match status" value="1"/>
</dbReference>
<dbReference type="SUPFAM" id="SSF53335">
    <property type="entry name" value="S-adenosyl-L-methionine-dependent methyltransferases"/>
    <property type="match status" value="1"/>
</dbReference>
<dbReference type="PROSITE" id="PS01131">
    <property type="entry name" value="RRNA_A_DIMETH"/>
    <property type="match status" value="1"/>
</dbReference>
<dbReference type="PROSITE" id="PS51689">
    <property type="entry name" value="SAM_RNA_A_N6_MT"/>
    <property type="match status" value="1"/>
</dbReference>
<name>RSMA_GEOTN</name>
<proteinExistence type="inferred from homology"/>
<comment type="function">
    <text evidence="1">Specifically dimethylates two adjacent adenosines (A1518 and A1519) in the loop of a conserved hairpin near the 3'-end of 16S rRNA in the 30S particle. May play a critical role in biogenesis of 30S subunits.</text>
</comment>
<comment type="catalytic activity">
    <reaction evidence="1">
        <text>adenosine(1518)/adenosine(1519) in 16S rRNA + 4 S-adenosyl-L-methionine = N(6)-dimethyladenosine(1518)/N(6)-dimethyladenosine(1519) in 16S rRNA + 4 S-adenosyl-L-homocysteine + 4 H(+)</text>
        <dbReference type="Rhea" id="RHEA:19609"/>
        <dbReference type="Rhea" id="RHEA-COMP:10232"/>
        <dbReference type="Rhea" id="RHEA-COMP:10233"/>
        <dbReference type="ChEBI" id="CHEBI:15378"/>
        <dbReference type="ChEBI" id="CHEBI:57856"/>
        <dbReference type="ChEBI" id="CHEBI:59789"/>
        <dbReference type="ChEBI" id="CHEBI:74411"/>
        <dbReference type="ChEBI" id="CHEBI:74493"/>
        <dbReference type="EC" id="2.1.1.182"/>
    </reaction>
</comment>
<comment type="subcellular location">
    <subcellularLocation>
        <location evidence="1">Cytoplasm</location>
    </subcellularLocation>
</comment>
<comment type="similarity">
    <text evidence="1">Belongs to the class I-like SAM-binding methyltransferase superfamily. rRNA adenine N(6)-methyltransferase family. RsmA subfamily.</text>
</comment>
<accession>A4IJB8</accession>
<protein>
    <recommendedName>
        <fullName evidence="1">Ribosomal RNA small subunit methyltransferase A</fullName>
        <ecNumber evidence="1">2.1.1.182</ecNumber>
    </recommendedName>
    <alternativeName>
        <fullName evidence="1">16S rRNA (adenine(1518)-N(6)/adenine(1519)-N(6))-dimethyltransferase</fullName>
    </alternativeName>
    <alternativeName>
        <fullName evidence="1">16S rRNA dimethyladenosine transferase</fullName>
    </alternativeName>
    <alternativeName>
        <fullName evidence="1">16S rRNA dimethylase</fullName>
    </alternativeName>
    <alternativeName>
        <fullName evidence="1">S-adenosylmethionine-6-N', N'-adenosyl(rRNA) dimethyltransferase</fullName>
    </alternativeName>
</protein>
<keyword id="KW-0963">Cytoplasm</keyword>
<keyword id="KW-0489">Methyltransferase</keyword>
<keyword id="KW-0694">RNA-binding</keyword>
<keyword id="KW-0698">rRNA processing</keyword>
<keyword id="KW-0949">S-adenosyl-L-methionine</keyword>
<keyword id="KW-0808">Transferase</keyword>
<organism>
    <name type="scientific">Geobacillus thermodenitrificans (strain NG80-2)</name>
    <dbReference type="NCBI Taxonomy" id="420246"/>
    <lineage>
        <taxon>Bacteria</taxon>
        <taxon>Bacillati</taxon>
        <taxon>Bacillota</taxon>
        <taxon>Bacilli</taxon>
        <taxon>Bacillales</taxon>
        <taxon>Anoxybacillaceae</taxon>
        <taxon>Geobacillus</taxon>
    </lineage>
</organism>
<evidence type="ECO:0000255" key="1">
    <source>
        <dbReference type="HAMAP-Rule" id="MF_00607"/>
    </source>
</evidence>
<feature type="chain" id="PRO_1000056622" description="Ribosomal RNA small subunit methyltransferase A">
    <location>
        <begin position="1"/>
        <end position="293"/>
    </location>
</feature>
<feature type="binding site" evidence="1">
    <location>
        <position position="29"/>
    </location>
    <ligand>
        <name>S-adenosyl-L-methionine</name>
        <dbReference type="ChEBI" id="CHEBI:59789"/>
    </ligand>
</feature>
<feature type="binding site" evidence="1">
    <location>
        <position position="31"/>
    </location>
    <ligand>
        <name>S-adenosyl-L-methionine</name>
        <dbReference type="ChEBI" id="CHEBI:59789"/>
    </ligand>
</feature>
<feature type="binding site" evidence="1">
    <location>
        <position position="56"/>
    </location>
    <ligand>
        <name>S-adenosyl-L-methionine</name>
        <dbReference type="ChEBI" id="CHEBI:59789"/>
    </ligand>
</feature>
<feature type="binding site" evidence="1">
    <location>
        <position position="77"/>
    </location>
    <ligand>
        <name>S-adenosyl-L-methionine</name>
        <dbReference type="ChEBI" id="CHEBI:59789"/>
    </ligand>
</feature>
<feature type="binding site" evidence="1">
    <location>
        <position position="102"/>
    </location>
    <ligand>
        <name>S-adenosyl-L-methionine</name>
        <dbReference type="ChEBI" id="CHEBI:59789"/>
    </ligand>
</feature>
<feature type="binding site" evidence="1">
    <location>
        <position position="127"/>
    </location>
    <ligand>
        <name>S-adenosyl-L-methionine</name>
        <dbReference type="ChEBI" id="CHEBI:59789"/>
    </ligand>
</feature>
<sequence>MHKDIATPGRTKEILARYGFSFKKSLGQNFLIDTNILRKIVDAAGISGDTGAIEIGPGIGALTEQLARRAKKVVAFEIDSRLLPILADTLSAYDNVRIIHQDVLKADLHAVIAEEFAEVSDRMVVANLPYYVTTPIIMKLLTERLPIRGMVVMMQKEVADRLAAKPGTKDYGSLTIAVQYYTEAEVVMTVPRTVFMPQPNVDSAVIRLTKRSHPPVAVEDEEVFFQVVRASFAQRRKTLLNNLLNNLPDGKEKKEQIERALDAVGIDPRRRGETLDMAEFASLSNALMPLFRV</sequence>
<reference key="1">
    <citation type="journal article" date="2007" name="Proc. Natl. Acad. Sci. U.S.A.">
        <title>Genome and proteome of long-chain alkane degrading Geobacillus thermodenitrificans NG80-2 isolated from a deep-subsurface oil reservoir.</title>
        <authorList>
            <person name="Feng L."/>
            <person name="Wang W."/>
            <person name="Cheng J."/>
            <person name="Ren Y."/>
            <person name="Zhao G."/>
            <person name="Gao C."/>
            <person name="Tang Y."/>
            <person name="Liu X."/>
            <person name="Han W."/>
            <person name="Peng X."/>
            <person name="Liu R."/>
            <person name="Wang L."/>
        </authorList>
    </citation>
    <scope>NUCLEOTIDE SEQUENCE [LARGE SCALE GENOMIC DNA]</scope>
    <source>
        <strain>NG80-2</strain>
    </source>
</reference>
<gene>
    <name evidence="1" type="primary">rsmA</name>
    <name evidence="1" type="synonym">ksgA</name>
    <name type="ordered locus">GTNG_0035</name>
</gene>